<reference key="1">
    <citation type="journal article" date="1999" name="Nature">
        <title>Sequence and analysis of chromosome 4 of the plant Arabidopsis thaliana.</title>
        <authorList>
            <person name="Mayer K.F.X."/>
            <person name="Schueller C."/>
            <person name="Wambutt R."/>
            <person name="Murphy G."/>
            <person name="Volckaert G."/>
            <person name="Pohl T."/>
            <person name="Duesterhoeft A."/>
            <person name="Stiekema W."/>
            <person name="Entian K.-D."/>
            <person name="Terryn N."/>
            <person name="Harris B."/>
            <person name="Ansorge W."/>
            <person name="Brandt P."/>
            <person name="Grivell L.A."/>
            <person name="Rieger M."/>
            <person name="Weichselgartner M."/>
            <person name="de Simone V."/>
            <person name="Obermaier B."/>
            <person name="Mache R."/>
            <person name="Mueller M."/>
            <person name="Kreis M."/>
            <person name="Delseny M."/>
            <person name="Puigdomenech P."/>
            <person name="Watson M."/>
            <person name="Schmidtheini T."/>
            <person name="Reichert B."/>
            <person name="Portetelle D."/>
            <person name="Perez-Alonso M."/>
            <person name="Boutry M."/>
            <person name="Bancroft I."/>
            <person name="Vos P."/>
            <person name="Hoheisel J."/>
            <person name="Zimmermann W."/>
            <person name="Wedler H."/>
            <person name="Ridley P."/>
            <person name="Langham S.-A."/>
            <person name="McCullagh B."/>
            <person name="Bilham L."/>
            <person name="Robben J."/>
            <person name="van der Schueren J."/>
            <person name="Grymonprez B."/>
            <person name="Chuang Y.-J."/>
            <person name="Vandenbussche F."/>
            <person name="Braeken M."/>
            <person name="Weltjens I."/>
            <person name="Voet M."/>
            <person name="Bastiaens I."/>
            <person name="Aert R."/>
            <person name="Defoor E."/>
            <person name="Weitzenegger T."/>
            <person name="Bothe G."/>
            <person name="Ramsperger U."/>
            <person name="Hilbert H."/>
            <person name="Braun M."/>
            <person name="Holzer E."/>
            <person name="Brandt A."/>
            <person name="Peters S."/>
            <person name="van Staveren M."/>
            <person name="Dirkse W."/>
            <person name="Mooijman P."/>
            <person name="Klein Lankhorst R."/>
            <person name="Rose M."/>
            <person name="Hauf J."/>
            <person name="Koetter P."/>
            <person name="Berneiser S."/>
            <person name="Hempel S."/>
            <person name="Feldpausch M."/>
            <person name="Lamberth S."/>
            <person name="Van den Daele H."/>
            <person name="De Keyser A."/>
            <person name="Buysshaert C."/>
            <person name="Gielen J."/>
            <person name="Villarroel R."/>
            <person name="De Clercq R."/>
            <person name="van Montagu M."/>
            <person name="Rogers J."/>
            <person name="Cronin A."/>
            <person name="Quail M.A."/>
            <person name="Bray-Allen S."/>
            <person name="Clark L."/>
            <person name="Doggett J."/>
            <person name="Hall S."/>
            <person name="Kay M."/>
            <person name="Lennard N."/>
            <person name="McLay K."/>
            <person name="Mayes R."/>
            <person name="Pettett A."/>
            <person name="Rajandream M.A."/>
            <person name="Lyne M."/>
            <person name="Benes V."/>
            <person name="Rechmann S."/>
            <person name="Borkova D."/>
            <person name="Bloecker H."/>
            <person name="Scharfe M."/>
            <person name="Grimm M."/>
            <person name="Loehnert T.-H."/>
            <person name="Dose S."/>
            <person name="de Haan M."/>
            <person name="Maarse A.C."/>
            <person name="Schaefer M."/>
            <person name="Mueller-Auer S."/>
            <person name="Gabel C."/>
            <person name="Fuchs M."/>
            <person name="Fartmann B."/>
            <person name="Granderath K."/>
            <person name="Dauner D."/>
            <person name="Herzl A."/>
            <person name="Neumann S."/>
            <person name="Argiriou A."/>
            <person name="Vitale D."/>
            <person name="Liguori R."/>
            <person name="Piravandi E."/>
            <person name="Massenet O."/>
            <person name="Quigley F."/>
            <person name="Clabauld G."/>
            <person name="Muendlein A."/>
            <person name="Felber R."/>
            <person name="Schnabl S."/>
            <person name="Hiller R."/>
            <person name="Schmidt W."/>
            <person name="Lecharny A."/>
            <person name="Aubourg S."/>
            <person name="Chefdor F."/>
            <person name="Cooke R."/>
            <person name="Berger C."/>
            <person name="Monfort A."/>
            <person name="Casacuberta E."/>
            <person name="Gibbons T."/>
            <person name="Weber N."/>
            <person name="Vandenbol M."/>
            <person name="Bargues M."/>
            <person name="Terol J."/>
            <person name="Torres A."/>
            <person name="Perez-Perez A."/>
            <person name="Purnelle B."/>
            <person name="Bent E."/>
            <person name="Johnson S."/>
            <person name="Tacon D."/>
            <person name="Jesse T."/>
            <person name="Heijnen L."/>
            <person name="Schwarz S."/>
            <person name="Scholler P."/>
            <person name="Heber S."/>
            <person name="Francs P."/>
            <person name="Bielke C."/>
            <person name="Frishman D."/>
            <person name="Haase D."/>
            <person name="Lemcke K."/>
            <person name="Mewes H.-W."/>
            <person name="Stocker S."/>
            <person name="Zaccaria P."/>
            <person name="Bevan M."/>
            <person name="Wilson R.K."/>
            <person name="de la Bastide M."/>
            <person name="Habermann K."/>
            <person name="Parnell L."/>
            <person name="Dedhia N."/>
            <person name="Gnoj L."/>
            <person name="Schutz K."/>
            <person name="Huang E."/>
            <person name="Spiegel L."/>
            <person name="Sekhon M."/>
            <person name="Murray J."/>
            <person name="Sheet P."/>
            <person name="Cordes M."/>
            <person name="Abu-Threideh J."/>
            <person name="Stoneking T."/>
            <person name="Kalicki J."/>
            <person name="Graves T."/>
            <person name="Harmon G."/>
            <person name="Edwards J."/>
            <person name="Latreille P."/>
            <person name="Courtney L."/>
            <person name="Cloud J."/>
            <person name="Abbott A."/>
            <person name="Scott K."/>
            <person name="Johnson D."/>
            <person name="Minx P."/>
            <person name="Bentley D."/>
            <person name="Fulton B."/>
            <person name="Miller N."/>
            <person name="Greco T."/>
            <person name="Kemp K."/>
            <person name="Kramer J."/>
            <person name="Fulton L."/>
            <person name="Mardis E."/>
            <person name="Dante M."/>
            <person name="Pepin K."/>
            <person name="Hillier L.W."/>
            <person name="Nelson J."/>
            <person name="Spieth J."/>
            <person name="Ryan E."/>
            <person name="Andrews S."/>
            <person name="Geisel C."/>
            <person name="Layman D."/>
            <person name="Du H."/>
            <person name="Ali J."/>
            <person name="Berghoff A."/>
            <person name="Jones K."/>
            <person name="Drone K."/>
            <person name="Cotton M."/>
            <person name="Joshu C."/>
            <person name="Antonoiu B."/>
            <person name="Zidanic M."/>
            <person name="Strong C."/>
            <person name="Sun H."/>
            <person name="Lamar B."/>
            <person name="Yordan C."/>
            <person name="Ma P."/>
            <person name="Zhong J."/>
            <person name="Preston R."/>
            <person name="Vil D."/>
            <person name="Shekher M."/>
            <person name="Matero A."/>
            <person name="Shah R."/>
            <person name="Swaby I.K."/>
            <person name="O'Shaughnessy A."/>
            <person name="Rodriguez M."/>
            <person name="Hoffman J."/>
            <person name="Till S."/>
            <person name="Granat S."/>
            <person name="Shohdy N."/>
            <person name="Hasegawa A."/>
            <person name="Hameed A."/>
            <person name="Lodhi M."/>
            <person name="Johnson A."/>
            <person name="Chen E."/>
            <person name="Marra M.A."/>
            <person name="Martienssen R."/>
            <person name="McCombie W.R."/>
        </authorList>
    </citation>
    <scope>NUCLEOTIDE SEQUENCE [LARGE SCALE GENOMIC DNA]</scope>
    <source>
        <strain>cv. Columbia</strain>
    </source>
</reference>
<reference key="2">
    <citation type="journal article" date="2017" name="Plant J.">
        <title>Araport11: a complete reannotation of the Arabidopsis thaliana reference genome.</title>
        <authorList>
            <person name="Cheng C.Y."/>
            <person name="Krishnakumar V."/>
            <person name="Chan A.P."/>
            <person name="Thibaud-Nissen F."/>
            <person name="Schobel S."/>
            <person name="Town C.D."/>
        </authorList>
    </citation>
    <scope>GENOME REANNOTATION</scope>
    <source>
        <strain>cv. Columbia</strain>
    </source>
</reference>
<reference key="3">
    <citation type="journal article" date="2005" name="Plant Physiol.">
        <title>Genome organization of more than 300 defensin-like genes in Arabidopsis.</title>
        <authorList>
            <person name="Silverstein K.A.T."/>
            <person name="Graham M.A."/>
            <person name="Paape T.D."/>
            <person name="VandenBosch K.A."/>
        </authorList>
    </citation>
    <scope>GENE FAMILY</scope>
</reference>
<gene>
    <name type="ordered locus">At4g11393</name>
    <name type="ORF">F25E4</name>
</gene>
<feature type="signal peptide" evidence="2">
    <location>
        <begin position="1"/>
        <end position="29"/>
    </location>
</feature>
<feature type="chain" id="PRO_0000379694" description="Putative defensin-like protein 202">
    <location>
        <begin position="30"/>
        <end position="78"/>
    </location>
</feature>
<feature type="disulfide bond" evidence="1">
    <location>
        <begin position="44"/>
        <end position="65"/>
    </location>
</feature>
<feature type="disulfide bond" evidence="1">
    <location>
        <begin position="49"/>
        <end position="74"/>
    </location>
</feature>
<feature type="disulfide bond" evidence="1">
    <location>
        <begin position="53"/>
        <end position="76"/>
    </location>
</feature>
<proteinExistence type="inferred from homology"/>
<keyword id="KW-0929">Antimicrobial</keyword>
<keyword id="KW-1015">Disulfide bond</keyword>
<keyword id="KW-0295">Fungicide</keyword>
<keyword id="KW-0611">Plant defense</keyword>
<keyword id="KW-1185">Reference proteome</keyword>
<keyword id="KW-0964">Secreted</keyword>
<keyword id="KW-0732">Signal</keyword>
<protein>
    <recommendedName>
        <fullName>Putative defensin-like protein 202</fullName>
    </recommendedName>
</protein>
<evidence type="ECO:0000250" key="1"/>
<evidence type="ECO:0000255" key="2"/>
<evidence type="ECO:0000305" key="3"/>
<organism>
    <name type="scientific">Arabidopsis thaliana</name>
    <name type="common">Mouse-ear cress</name>
    <dbReference type="NCBI Taxonomy" id="3702"/>
    <lineage>
        <taxon>Eukaryota</taxon>
        <taxon>Viridiplantae</taxon>
        <taxon>Streptophyta</taxon>
        <taxon>Embryophyta</taxon>
        <taxon>Tracheophyta</taxon>
        <taxon>Spermatophyta</taxon>
        <taxon>Magnoliopsida</taxon>
        <taxon>eudicotyledons</taxon>
        <taxon>Gunneridae</taxon>
        <taxon>Pentapetalae</taxon>
        <taxon>rosids</taxon>
        <taxon>malvids</taxon>
        <taxon>Brassicales</taxon>
        <taxon>Brassicaceae</taxon>
        <taxon>Camelineae</taxon>
        <taxon>Arabidopsis</taxon>
    </lineage>
</organism>
<comment type="subcellular location">
    <subcellularLocation>
        <location evidence="1">Secreted</location>
    </subcellularLocation>
</comment>
<comment type="similarity">
    <text evidence="3">Belongs to the DEFL family.</text>
</comment>
<comment type="caution">
    <text evidence="3">Lacks 1 of the 4 disulfide bonds, which are conserved features of the family.</text>
</comment>
<dbReference type="EMBL" id="AL050399">
    <property type="status" value="NOT_ANNOTATED_CDS"/>
    <property type="molecule type" value="Genomic_DNA"/>
</dbReference>
<dbReference type="EMBL" id="AL161531">
    <property type="status" value="NOT_ANNOTATED_CDS"/>
    <property type="molecule type" value="Genomic_DNA"/>
</dbReference>
<dbReference type="EMBL" id="CP002687">
    <property type="protein sequence ID" value="AEE83007.1"/>
    <property type="molecule type" value="Genomic_DNA"/>
</dbReference>
<dbReference type="RefSeq" id="NP_001031618.1">
    <property type="nucleotide sequence ID" value="NM_001036541.2"/>
</dbReference>
<dbReference type="SMR" id="Q2V3J6"/>
<dbReference type="BioGRID" id="530487">
    <property type="interactions" value="1"/>
</dbReference>
<dbReference type="STRING" id="3702.Q2V3J6"/>
<dbReference type="PaxDb" id="3702-AT4G11393.1"/>
<dbReference type="EnsemblPlants" id="AT4G11393.1">
    <property type="protein sequence ID" value="AT4G11393.1"/>
    <property type="gene ID" value="AT4G11393"/>
</dbReference>
<dbReference type="GeneID" id="3770126"/>
<dbReference type="Gramene" id="AT4G11393.1">
    <property type="protein sequence ID" value="AT4G11393.1"/>
    <property type="gene ID" value="AT4G11393"/>
</dbReference>
<dbReference type="KEGG" id="ath:AT4G11393"/>
<dbReference type="Araport" id="AT4G11393"/>
<dbReference type="TAIR" id="AT4G11393">
    <property type="gene designation" value="DEFL202"/>
</dbReference>
<dbReference type="HOGENOM" id="CLU_152804_1_0_1"/>
<dbReference type="InParanoid" id="Q2V3J6"/>
<dbReference type="OMA" id="TELHCHC"/>
<dbReference type="PhylomeDB" id="Q2V3J6"/>
<dbReference type="PRO" id="PR:Q2V3J6"/>
<dbReference type="Proteomes" id="UP000006548">
    <property type="component" value="Chromosome 4"/>
</dbReference>
<dbReference type="ExpressionAtlas" id="Q2V3J6">
    <property type="expression patterns" value="baseline and differential"/>
</dbReference>
<dbReference type="GO" id="GO:0005576">
    <property type="term" value="C:extracellular region"/>
    <property type="evidence" value="ECO:0007669"/>
    <property type="project" value="UniProtKB-SubCell"/>
</dbReference>
<dbReference type="GO" id="GO:0050832">
    <property type="term" value="P:defense response to fungus"/>
    <property type="evidence" value="ECO:0007669"/>
    <property type="project" value="UniProtKB-KW"/>
</dbReference>
<dbReference type="GO" id="GO:0031640">
    <property type="term" value="P:killing of cells of another organism"/>
    <property type="evidence" value="ECO:0007669"/>
    <property type="project" value="UniProtKB-KW"/>
</dbReference>
<dbReference type="GO" id="GO:0009651">
    <property type="term" value="P:response to salt stress"/>
    <property type="evidence" value="ECO:0000315"/>
    <property type="project" value="TAIR"/>
</dbReference>
<name>DF202_ARATH</name>
<sequence length="78" mass="8786">MAKTQNFVCFTAVLLILILVSTEIPMIEGKTCKLFRGECPVDPCEPEKCDECCKATFGKQICGKCEQESTELHCHCRR</sequence>
<accession>Q2V3J6</accession>